<reference key="1">
    <citation type="journal article" date="2011" name="Stand. Genomic Sci.">
        <title>Complete genome sequence of 'Thioalkalivibrio sulfidophilus' HL-EbGr7.</title>
        <authorList>
            <person name="Muyzer G."/>
            <person name="Sorokin D.Y."/>
            <person name="Mavromatis K."/>
            <person name="Lapidus A."/>
            <person name="Clum A."/>
            <person name="Ivanova N."/>
            <person name="Pati A."/>
            <person name="d'Haeseleer P."/>
            <person name="Woyke T."/>
            <person name="Kyrpides N.C."/>
        </authorList>
    </citation>
    <scope>NUCLEOTIDE SEQUENCE [LARGE SCALE GENOMIC DNA]</scope>
    <source>
        <strain>HL-EbGR7</strain>
    </source>
</reference>
<proteinExistence type="inferred from homology"/>
<sequence length="129" mass="14766">MSSQPSKDLETFENPQPGRDYTIRIRVPEFTCLCPKTGQPDFATLFLDYVPRARCVELKSLKLYVWAFRDQGAFHEKVTNEILNDLVAATDPNFMRLTAEFNVRGGVYTTVVAEHRHPDWQPPVPVTLP</sequence>
<dbReference type="EC" id="1.7.1.13" evidence="1"/>
<dbReference type="EMBL" id="CP001339">
    <property type="protein sequence ID" value="ACL73107.1"/>
    <property type="molecule type" value="Genomic_DNA"/>
</dbReference>
<dbReference type="RefSeq" id="WP_012638586.1">
    <property type="nucleotide sequence ID" value="NC_011901.1"/>
</dbReference>
<dbReference type="SMR" id="B8GTL3"/>
<dbReference type="STRING" id="396588.Tgr7_2027"/>
<dbReference type="KEGG" id="tgr:Tgr7_2027"/>
<dbReference type="eggNOG" id="COG0780">
    <property type="taxonomic scope" value="Bacteria"/>
</dbReference>
<dbReference type="HOGENOM" id="CLU_102489_1_0_6"/>
<dbReference type="OrthoDB" id="9789995at2"/>
<dbReference type="UniPathway" id="UPA00392"/>
<dbReference type="Proteomes" id="UP000002383">
    <property type="component" value="Chromosome"/>
</dbReference>
<dbReference type="GO" id="GO:0005737">
    <property type="term" value="C:cytoplasm"/>
    <property type="evidence" value="ECO:0007669"/>
    <property type="project" value="UniProtKB-SubCell"/>
</dbReference>
<dbReference type="GO" id="GO:0033739">
    <property type="term" value="F:preQ1 synthase activity"/>
    <property type="evidence" value="ECO:0007669"/>
    <property type="project" value="UniProtKB-UniRule"/>
</dbReference>
<dbReference type="GO" id="GO:0008616">
    <property type="term" value="P:queuosine biosynthetic process"/>
    <property type="evidence" value="ECO:0007669"/>
    <property type="project" value="UniProtKB-UniRule"/>
</dbReference>
<dbReference type="GO" id="GO:0006400">
    <property type="term" value="P:tRNA modification"/>
    <property type="evidence" value="ECO:0007669"/>
    <property type="project" value="UniProtKB-UniRule"/>
</dbReference>
<dbReference type="Gene3D" id="3.30.1130.10">
    <property type="match status" value="1"/>
</dbReference>
<dbReference type="HAMAP" id="MF_00818">
    <property type="entry name" value="QueF_type1"/>
    <property type="match status" value="1"/>
</dbReference>
<dbReference type="InterPro" id="IPR043133">
    <property type="entry name" value="GTP-CH-I_C/QueF"/>
</dbReference>
<dbReference type="InterPro" id="IPR050084">
    <property type="entry name" value="NADPH_dep_7-cyano-7-deazaG_red"/>
</dbReference>
<dbReference type="InterPro" id="IPR029500">
    <property type="entry name" value="QueF"/>
</dbReference>
<dbReference type="InterPro" id="IPR016856">
    <property type="entry name" value="QueF_type1"/>
</dbReference>
<dbReference type="NCBIfam" id="TIGR03139">
    <property type="entry name" value="QueF-II"/>
    <property type="match status" value="1"/>
</dbReference>
<dbReference type="PANTHER" id="PTHR34354">
    <property type="entry name" value="NADPH-DEPENDENT 7-CYANO-7-DEAZAGUANINE REDUCTASE"/>
    <property type="match status" value="1"/>
</dbReference>
<dbReference type="PANTHER" id="PTHR34354:SF1">
    <property type="entry name" value="NADPH-DEPENDENT 7-CYANO-7-DEAZAGUANINE REDUCTASE"/>
    <property type="match status" value="1"/>
</dbReference>
<dbReference type="Pfam" id="PF14489">
    <property type="entry name" value="QueF"/>
    <property type="match status" value="1"/>
</dbReference>
<dbReference type="PIRSF" id="PIRSF027377">
    <property type="entry name" value="Nitrile_oxidored_QueF"/>
    <property type="match status" value="1"/>
</dbReference>
<dbReference type="SUPFAM" id="SSF55620">
    <property type="entry name" value="Tetrahydrobiopterin biosynthesis enzymes-like"/>
    <property type="match status" value="1"/>
</dbReference>
<organism>
    <name type="scientific">Thioalkalivibrio sulfidiphilus (strain HL-EbGR7)</name>
    <dbReference type="NCBI Taxonomy" id="396588"/>
    <lineage>
        <taxon>Bacteria</taxon>
        <taxon>Pseudomonadati</taxon>
        <taxon>Pseudomonadota</taxon>
        <taxon>Gammaproteobacteria</taxon>
        <taxon>Chromatiales</taxon>
        <taxon>Ectothiorhodospiraceae</taxon>
        <taxon>Thioalkalivibrio</taxon>
    </lineage>
</organism>
<gene>
    <name evidence="1" type="primary">queF</name>
    <name type="ordered locus">Tgr7_2027</name>
</gene>
<comment type="function">
    <text evidence="1">Catalyzes the NADPH-dependent reduction of 7-cyano-7-deazaguanine (preQ0) to 7-aminomethyl-7-deazaguanine (preQ1).</text>
</comment>
<comment type="catalytic activity">
    <reaction evidence="1">
        <text>7-aminomethyl-7-carbaguanine + 2 NADP(+) = 7-cyano-7-deazaguanine + 2 NADPH + 3 H(+)</text>
        <dbReference type="Rhea" id="RHEA:13409"/>
        <dbReference type="ChEBI" id="CHEBI:15378"/>
        <dbReference type="ChEBI" id="CHEBI:45075"/>
        <dbReference type="ChEBI" id="CHEBI:57783"/>
        <dbReference type="ChEBI" id="CHEBI:58349"/>
        <dbReference type="ChEBI" id="CHEBI:58703"/>
        <dbReference type="EC" id="1.7.1.13"/>
    </reaction>
</comment>
<comment type="pathway">
    <text evidence="1">tRNA modification; tRNA-queuosine biosynthesis.</text>
</comment>
<comment type="subcellular location">
    <subcellularLocation>
        <location evidence="1">Cytoplasm</location>
    </subcellularLocation>
</comment>
<comment type="similarity">
    <text evidence="1">Belongs to the GTP cyclohydrolase I family. QueF type 1 subfamily.</text>
</comment>
<keyword id="KW-0963">Cytoplasm</keyword>
<keyword id="KW-0521">NADP</keyword>
<keyword id="KW-0560">Oxidoreductase</keyword>
<keyword id="KW-0671">Queuosine biosynthesis</keyword>
<keyword id="KW-1185">Reference proteome</keyword>
<name>QUEF_THISH</name>
<protein>
    <recommendedName>
        <fullName evidence="1">NADPH-dependent 7-cyano-7-deazaguanine reductase</fullName>
        <ecNumber evidence="1">1.7.1.13</ecNumber>
    </recommendedName>
    <alternativeName>
        <fullName evidence="1">7-cyano-7-carbaguanine reductase</fullName>
    </alternativeName>
    <alternativeName>
        <fullName evidence="1">NADPH-dependent nitrile oxidoreductase</fullName>
    </alternativeName>
    <alternativeName>
        <fullName evidence="1">PreQ(0) reductase</fullName>
    </alternativeName>
</protein>
<accession>B8GTL3</accession>
<evidence type="ECO:0000255" key="1">
    <source>
        <dbReference type="HAMAP-Rule" id="MF_00818"/>
    </source>
</evidence>
<feature type="chain" id="PRO_1000148677" description="NADPH-dependent 7-cyano-7-deazaguanine reductase">
    <location>
        <begin position="1"/>
        <end position="129"/>
    </location>
</feature>
<feature type="active site" description="Thioimide intermediate" evidence="1">
    <location>
        <position position="34"/>
    </location>
</feature>
<feature type="active site" description="Proton donor" evidence="1">
    <location>
        <position position="41"/>
    </location>
</feature>
<feature type="binding site" evidence="1">
    <location>
        <begin position="56"/>
        <end position="58"/>
    </location>
    <ligand>
        <name>substrate</name>
    </ligand>
</feature>
<feature type="binding site" evidence="1">
    <location>
        <begin position="75"/>
        <end position="76"/>
    </location>
    <ligand>
        <name>substrate</name>
    </ligand>
</feature>